<comment type="function">
    <text evidence="1">Together with its co-chaperonin GroES, plays an essential role in assisting protein folding. The GroEL-GroES system forms a nano-cage that allows encapsulation of the non-native substrate proteins and provides a physical environment optimized to promote and accelerate protein folding.</text>
</comment>
<comment type="catalytic activity">
    <reaction evidence="1">
        <text>ATP + H2O + a folded polypeptide = ADP + phosphate + an unfolded polypeptide.</text>
        <dbReference type="EC" id="5.6.1.7"/>
    </reaction>
</comment>
<comment type="subunit">
    <text evidence="1">Forms a cylinder of 14 subunits composed of two heptameric rings stacked back-to-back. Interacts with the co-chaperonin GroES.</text>
</comment>
<comment type="subcellular location">
    <subcellularLocation>
        <location evidence="1">Cytoplasm</location>
    </subcellularLocation>
</comment>
<comment type="similarity">
    <text evidence="1">Belongs to the chaperonin (HSP60) family.</text>
</comment>
<dbReference type="EC" id="5.6.1.7" evidence="1"/>
<dbReference type="EMBL" id="AP008981">
    <property type="protein sequence ID" value="BAG39717.1"/>
    <property type="molecule type" value="Genomic_DNA"/>
</dbReference>
<dbReference type="RefSeq" id="WP_012460965.1">
    <property type="nucleotide sequence ID" value="NC_010793.1"/>
</dbReference>
<dbReference type="SMR" id="B3CQ26"/>
<dbReference type="GeneID" id="89459258"/>
<dbReference type="KEGG" id="ott:OTT_0259"/>
<dbReference type="HOGENOM" id="CLU_016503_3_0_5"/>
<dbReference type="OrthoDB" id="9766614at2"/>
<dbReference type="Proteomes" id="UP000001033">
    <property type="component" value="Chromosome"/>
</dbReference>
<dbReference type="GO" id="GO:0005737">
    <property type="term" value="C:cytoplasm"/>
    <property type="evidence" value="ECO:0007669"/>
    <property type="project" value="UniProtKB-SubCell"/>
</dbReference>
<dbReference type="GO" id="GO:0005524">
    <property type="term" value="F:ATP binding"/>
    <property type="evidence" value="ECO:0007669"/>
    <property type="project" value="UniProtKB-UniRule"/>
</dbReference>
<dbReference type="GO" id="GO:0140662">
    <property type="term" value="F:ATP-dependent protein folding chaperone"/>
    <property type="evidence" value="ECO:0007669"/>
    <property type="project" value="InterPro"/>
</dbReference>
<dbReference type="GO" id="GO:0016853">
    <property type="term" value="F:isomerase activity"/>
    <property type="evidence" value="ECO:0007669"/>
    <property type="project" value="UniProtKB-KW"/>
</dbReference>
<dbReference type="GO" id="GO:0051082">
    <property type="term" value="F:unfolded protein binding"/>
    <property type="evidence" value="ECO:0007669"/>
    <property type="project" value="UniProtKB-UniRule"/>
</dbReference>
<dbReference type="GO" id="GO:0042026">
    <property type="term" value="P:protein refolding"/>
    <property type="evidence" value="ECO:0007669"/>
    <property type="project" value="UniProtKB-UniRule"/>
</dbReference>
<dbReference type="CDD" id="cd03344">
    <property type="entry name" value="GroEL"/>
    <property type="match status" value="1"/>
</dbReference>
<dbReference type="FunFam" id="3.50.7.10:FF:000001">
    <property type="entry name" value="60 kDa chaperonin"/>
    <property type="match status" value="1"/>
</dbReference>
<dbReference type="Gene3D" id="3.50.7.10">
    <property type="entry name" value="GroEL"/>
    <property type="match status" value="1"/>
</dbReference>
<dbReference type="Gene3D" id="1.10.560.10">
    <property type="entry name" value="GroEL-like equatorial domain"/>
    <property type="match status" value="1"/>
</dbReference>
<dbReference type="Gene3D" id="3.30.260.10">
    <property type="entry name" value="TCP-1-like chaperonin intermediate domain"/>
    <property type="match status" value="1"/>
</dbReference>
<dbReference type="HAMAP" id="MF_00600">
    <property type="entry name" value="CH60"/>
    <property type="match status" value="1"/>
</dbReference>
<dbReference type="InterPro" id="IPR018370">
    <property type="entry name" value="Chaperonin_Cpn60_CS"/>
</dbReference>
<dbReference type="InterPro" id="IPR001844">
    <property type="entry name" value="Cpn60/GroEL"/>
</dbReference>
<dbReference type="InterPro" id="IPR002423">
    <property type="entry name" value="Cpn60/GroEL/TCP-1"/>
</dbReference>
<dbReference type="InterPro" id="IPR027409">
    <property type="entry name" value="GroEL-like_apical_dom_sf"/>
</dbReference>
<dbReference type="InterPro" id="IPR027413">
    <property type="entry name" value="GROEL-like_equatorial_sf"/>
</dbReference>
<dbReference type="InterPro" id="IPR027410">
    <property type="entry name" value="TCP-1-like_intermed_sf"/>
</dbReference>
<dbReference type="NCBIfam" id="TIGR02348">
    <property type="entry name" value="GroEL"/>
    <property type="match status" value="1"/>
</dbReference>
<dbReference type="NCBIfam" id="NF000592">
    <property type="entry name" value="PRK00013.1"/>
    <property type="match status" value="1"/>
</dbReference>
<dbReference type="NCBIfam" id="NF009487">
    <property type="entry name" value="PRK12849.1"/>
    <property type="match status" value="1"/>
</dbReference>
<dbReference type="NCBIfam" id="NF009488">
    <property type="entry name" value="PRK12850.1"/>
    <property type="match status" value="1"/>
</dbReference>
<dbReference type="NCBIfam" id="NF009489">
    <property type="entry name" value="PRK12851.1"/>
    <property type="match status" value="1"/>
</dbReference>
<dbReference type="PANTHER" id="PTHR45633">
    <property type="entry name" value="60 KDA HEAT SHOCK PROTEIN, MITOCHONDRIAL"/>
    <property type="match status" value="1"/>
</dbReference>
<dbReference type="Pfam" id="PF00118">
    <property type="entry name" value="Cpn60_TCP1"/>
    <property type="match status" value="1"/>
</dbReference>
<dbReference type="PRINTS" id="PR00298">
    <property type="entry name" value="CHAPERONIN60"/>
</dbReference>
<dbReference type="SUPFAM" id="SSF52029">
    <property type="entry name" value="GroEL apical domain-like"/>
    <property type="match status" value="1"/>
</dbReference>
<dbReference type="SUPFAM" id="SSF48592">
    <property type="entry name" value="GroEL equatorial domain-like"/>
    <property type="match status" value="1"/>
</dbReference>
<dbReference type="SUPFAM" id="SSF54849">
    <property type="entry name" value="GroEL-intermediate domain like"/>
    <property type="match status" value="1"/>
</dbReference>
<dbReference type="PROSITE" id="PS00296">
    <property type="entry name" value="CHAPERONINS_CPN60"/>
    <property type="match status" value="1"/>
</dbReference>
<keyword id="KW-0067">ATP-binding</keyword>
<keyword id="KW-0143">Chaperone</keyword>
<keyword id="KW-0963">Cytoplasm</keyword>
<keyword id="KW-0413">Isomerase</keyword>
<keyword id="KW-0547">Nucleotide-binding</keyword>
<sequence>MSKQIVHGDQCRKKIIEGINVVANAVGITLGPKGRCVAIEQSYGPPKITKDGVSVAKAIQLKDKSLNVGAQFVISVASKTADVAGDGTTTATVIADAAVRELNKAEVAGIDIQEVRKGAEKAVEAVIADVRKNSSPVKNEEEIAQVATVSSNGDREIGEKIANAMKQVGQEGVITVEDSKNFNFEVEVVKGMRFDRGYISQYFATNREKMITEFENPYILLLDQKVSTVQPLVPVLEAVAHTGKPLVLIADDVDGEALTALILNNLKGSIKVVAVKAPGFGDRKKEMLEDIAILTNGEVITEQLGIKLEKVNDTSKLGTANRVIVTKDHTTIVHDKNNSDIEKKVNSRCEQIREAIKDTTSDYEKEKLQERLAKLRNGVAVLKVGGATEVEQKERKDRVEDALHATRAAVEEGIVPGGGVALFYASRVLDSLKFDNEDQRVGINIIKKVLEAPVRQIVKNAGGKEDVVVNELSKSNDKNRGFDARTMQYVDMIKAGIVDPTKVVRTALQDAFSVASLVIATSAMITDHEEDNNTGNRSGGGVGGGHHGGMGGMDF</sequence>
<feature type="chain" id="PRO_1000130041" description="Chaperonin GroEL">
    <location>
        <begin position="1"/>
        <end position="555"/>
    </location>
</feature>
<feature type="region of interest" description="Disordered" evidence="2">
    <location>
        <begin position="528"/>
        <end position="555"/>
    </location>
</feature>
<feature type="compositionally biased region" description="Gly residues" evidence="2">
    <location>
        <begin position="537"/>
        <end position="555"/>
    </location>
</feature>
<feature type="binding site" evidence="1">
    <location>
        <begin position="29"/>
        <end position="32"/>
    </location>
    <ligand>
        <name>ATP</name>
        <dbReference type="ChEBI" id="CHEBI:30616"/>
    </ligand>
</feature>
<feature type="binding site" evidence="1">
    <location>
        <position position="50"/>
    </location>
    <ligand>
        <name>ATP</name>
        <dbReference type="ChEBI" id="CHEBI:30616"/>
    </ligand>
</feature>
<feature type="binding site" evidence="1">
    <location>
        <begin position="86"/>
        <end position="90"/>
    </location>
    <ligand>
        <name>ATP</name>
        <dbReference type="ChEBI" id="CHEBI:30616"/>
    </ligand>
</feature>
<feature type="binding site" evidence="1">
    <location>
        <position position="418"/>
    </location>
    <ligand>
        <name>ATP</name>
        <dbReference type="ChEBI" id="CHEBI:30616"/>
    </ligand>
</feature>
<feature type="binding site" evidence="1">
    <location>
        <position position="499"/>
    </location>
    <ligand>
        <name>ATP</name>
        <dbReference type="ChEBI" id="CHEBI:30616"/>
    </ligand>
</feature>
<proteinExistence type="inferred from homology"/>
<organism>
    <name type="scientific">Orientia tsutsugamushi (strain Ikeda)</name>
    <name type="common">Rickettsia tsutsugamushi</name>
    <dbReference type="NCBI Taxonomy" id="334380"/>
    <lineage>
        <taxon>Bacteria</taxon>
        <taxon>Pseudomonadati</taxon>
        <taxon>Pseudomonadota</taxon>
        <taxon>Alphaproteobacteria</taxon>
        <taxon>Rickettsiales</taxon>
        <taxon>Rickettsiaceae</taxon>
        <taxon>Rickettsieae</taxon>
        <taxon>Orientia</taxon>
    </lineage>
</organism>
<evidence type="ECO:0000255" key="1">
    <source>
        <dbReference type="HAMAP-Rule" id="MF_00600"/>
    </source>
</evidence>
<evidence type="ECO:0000256" key="2">
    <source>
        <dbReference type="SAM" id="MobiDB-lite"/>
    </source>
</evidence>
<reference key="1">
    <citation type="journal article" date="2008" name="DNA Res.">
        <title>The whole-genome sequencing of the obligate intracellular bacterium Orientia tsutsugamushi revealed massive gene amplification during reductive genome evolution.</title>
        <authorList>
            <person name="Nakayama K."/>
            <person name="Yamashita A."/>
            <person name="Kurokawa K."/>
            <person name="Morimoto T."/>
            <person name="Ogawa M."/>
            <person name="Fukuhara M."/>
            <person name="Urakami H."/>
            <person name="Ohnishi M."/>
            <person name="Uchiyama I."/>
            <person name="Ogura Y."/>
            <person name="Ooka T."/>
            <person name="Oshima K."/>
            <person name="Tamura A."/>
            <person name="Hattori M."/>
            <person name="Hayashi T."/>
        </authorList>
    </citation>
    <scope>NUCLEOTIDE SEQUENCE [LARGE SCALE GENOMIC DNA]</scope>
    <source>
        <strain>Ikeda</strain>
    </source>
</reference>
<gene>
    <name evidence="1" type="primary">groEL</name>
    <name evidence="1" type="synonym">groL</name>
    <name type="ordered locus">OTT_0259</name>
</gene>
<accession>B3CQ26</accession>
<name>CH60_ORITI</name>
<protein>
    <recommendedName>
        <fullName evidence="1">Chaperonin GroEL</fullName>
        <ecNumber evidence="1">5.6.1.7</ecNumber>
    </recommendedName>
    <alternativeName>
        <fullName evidence="1">60 kDa chaperonin</fullName>
    </alternativeName>
    <alternativeName>
        <fullName evidence="1">Chaperonin-60</fullName>
        <shortName evidence="1">Cpn60</shortName>
    </alternativeName>
</protein>